<evidence type="ECO:0000255" key="1"/>
<evidence type="ECO:0000255" key="2">
    <source>
        <dbReference type="PROSITE-ProRule" id="PRU00541"/>
    </source>
</evidence>
<evidence type="ECO:0000255" key="3">
    <source>
        <dbReference type="PROSITE-ProRule" id="PRU00542"/>
    </source>
</evidence>
<evidence type="ECO:0000269" key="4">
    <source>
    </source>
</evidence>
<evidence type="ECO:0000269" key="5">
    <source>
    </source>
</evidence>
<evidence type="ECO:0000269" key="6">
    <source>
    </source>
</evidence>
<evidence type="ECO:0000269" key="7">
    <source>
    </source>
</evidence>
<evidence type="ECO:0000305" key="8"/>
<feature type="transit peptide" description="Mitochondrion" evidence="1">
    <location>
        <begin position="1"/>
        <end position="25"/>
    </location>
</feature>
<feature type="chain" id="PRO_0000013306" description="ATP-dependent RNA helicase SUV3, mitochondrial">
    <location>
        <begin position="26"/>
        <end position="737"/>
    </location>
</feature>
<feature type="domain" description="Helicase ATP-binding" evidence="2">
    <location>
        <begin position="226"/>
        <end position="365"/>
    </location>
</feature>
<feature type="domain" description="Helicase C-terminal" evidence="3">
    <location>
        <begin position="390"/>
        <end position="546"/>
    </location>
</feature>
<feature type="binding site" evidence="2">
    <location>
        <begin position="239"/>
        <end position="246"/>
    </location>
    <ligand>
        <name>ATP</name>
        <dbReference type="ChEBI" id="CHEBI:30616"/>
    </ligand>
</feature>
<feature type="mutagenesis site" description="In suv3-1; probably excised introns are less efficiently released." evidence="5">
    <original>V</original>
    <variation>L</variation>
    <location>
        <position position="272"/>
    </location>
</feature>
<feature type="sequence conflict" description="In Ref. 1; AAA35135." evidence="8" ref="1">
    <original>W</original>
    <variation>R</variation>
    <location>
        <position position="165"/>
    </location>
</feature>
<feature type="sequence conflict" description="In Ref. 1; AAA35135." evidence="8" ref="1">
    <original>E</original>
    <variation>D</variation>
    <location>
        <position position="664"/>
    </location>
</feature>
<sequence>MALVKYSTVFFPLRSLRLFVSIKKAYYHSEPHSIDLFHDKDWIVKRPKFLNLPKNEHSKLDIFQFNFNKSESNNVYLQDSSFKDNLDKAMQFIYNDKLSSLDAKQVPIKNLAWLKLRDYIYQQLKDPKLQAKTYVPSVSEIIHPSSPGNLISLLINCNKISNLVWKSVLKYSLSNNITTLDKFIHVLQQTFDHVYEQEILPMMTNTDDTDGAHNVDITNPAEWFPEARKIRRHIIMHIGPTNSGKTYRALQKLKSVDRGYYAGPLRLLAREVYDRFHAEKIRCNLLTGEEVIRDLDDRGNSAGLTSGTVEMVPINQKFDVVVLDEIQMMSDGDRGWAWTNALLGVVSKEVHLCGEKSVLPLVKSIVKMTGDKLTINEYERLGKLSVEEKPIKDGIKGLRKGDCVVAFSKKKILDLKLKIEKDTNLKVAVIYGSLPPETRVQQAALFNNGEYDIMVASDAIGMGLNLSIDRVVFTTNMKYNGEELMEMTSSQIKQIGGRAGRFKSRSASGGVPQGFITSFESKVLKSVRKAIEAPVEYLKTAVTWPTDEICAQLMTQFPPGTPTSVLLQTISDELEKSSDNLFTLSDLKSKLKVIGLFEHMEDIPFFDKLKLSNAPVKDMPMVTKAFTKFCETIAKRHTRGLLSYRLPFNLLDYNCIPNESYSLEVYESLYNIITLYFWLSNRYPNYFIDMESAKDLKYFCEMIIFEKLDRLKKNPYAHKPFGSTRGHLSSSRRRLRT</sequence>
<reference key="1">
    <citation type="journal article" date="1992" name="Proc. Natl. Acad. Sci. U.S.A.">
        <title>The yeast nuclear gene suv3 affecting mitochondrial post-transcriptional processes encodes a putative ATP-dependent RNA helicase.</title>
        <authorList>
            <person name="Stepien P.P."/>
            <person name="Margossian S.P."/>
            <person name="Landsman D."/>
            <person name="Butow R.A."/>
        </authorList>
    </citation>
    <scope>NUCLEOTIDE SEQUENCE [GENOMIC DNA]</scope>
    <scope>MUTAGENESIS OF VAL-272</scope>
</reference>
<reference key="2">
    <citation type="journal article" date="1997" name="Nature">
        <title>The nucleotide sequence of Saccharomyces cerevisiae chromosome XVI.</title>
        <authorList>
            <person name="Bussey H."/>
            <person name="Storms R.K."/>
            <person name="Ahmed A."/>
            <person name="Albermann K."/>
            <person name="Allen E."/>
            <person name="Ansorge W."/>
            <person name="Araujo R."/>
            <person name="Aparicio A."/>
            <person name="Barrell B.G."/>
            <person name="Badcock K."/>
            <person name="Benes V."/>
            <person name="Botstein D."/>
            <person name="Bowman S."/>
            <person name="Brueckner M."/>
            <person name="Carpenter J."/>
            <person name="Cherry J.M."/>
            <person name="Chung E."/>
            <person name="Churcher C.M."/>
            <person name="Coster F."/>
            <person name="Davis K."/>
            <person name="Davis R.W."/>
            <person name="Dietrich F.S."/>
            <person name="Delius H."/>
            <person name="DiPaolo T."/>
            <person name="Dubois E."/>
            <person name="Duesterhoeft A."/>
            <person name="Duncan M."/>
            <person name="Floeth M."/>
            <person name="Fortin N."/>
            <person name="Friesen J.D."/>
            <person name="Fritz C."/>
            <person name="Goffeau A."/>
            <person name="Hall J."/>
            <person name="Hebling U."/>
            <person name="Heumann K."/>
            <person name="Hilbert H."/>
            <person name="Hillier L.W."/>
            <person name="Hunicke-Smith S."/>
            <person name="Hyman R.W."/>
            <person name="Johnston M."/>
            <person name="Kalman S."/>
            <person name="Kleine K."/>
            <person name="Komp C."/>
            <person name="Kurdi O."/>
            <person name="Lashkari D."/>
            <person name="Lew H."/>
            <person name="Lin A."/>
            <person name="Lin D."/>
            <person name="Louis E.J."/>
            <person name="Marathe R."/>
            <person name="Messenguy F."/>
            <person name="Mewes H.-W."/>
            <person name="Mirtipati S."/>
            <person name="Moestl D."/>
            <person name="Mueller-Auer S."/>
            <person name="Namath A."/>
            <person name="Nentwich U."/>
            <person name="Oefner P."/>
            <person name="Pearson D."/>
            <person name="Petel F.X."/>
            <person name="Pohl T.M."/>
            <person name="Purnelle B."/>
            <person name="Rajandream M.A."/>
            <person name="Rechmann S."/>
            <person name="Rieger M."/>
            <person name="Riles L."/>
            <person name="Roberts D."/>
            <person name="Schaefer M."/>
            <person name="Scharfe M."/>
            <person name="Scherens B."/>
            <person name="Schramm S."/>
            <person name="Schroeder M."/>
            <person name="Sdicu A.-M."/>
            <person name="Tettelin H."/>
            <person name="Urrestarazu L.A."/>
            <person name="Ushinsky S."/>
            <person name="Vierendeels F."/>
            <person name="Vissers S."/>
            <person name="Voss H."/>
            <person name="Walsh S.V."/>
            <person name="Wambutt R."/>
            <person name="Wang Y."/>
            <person name="Wedler E."/>
            <person name="Wedler H."/>
            <person name="Winnett E."/>
            <person name="Zhong W.-W."/>
            <person name="Zollner A."/>
            <person name="Vo D.H."/>
            <person name="Hani J."/>
        </authorList>
    </citation>
    <scope>NUCLEOTIDE SEQUENCE [LARGE SCALE GENOMIC DNA]</scope>
    <source>
        <strain>ATCC 204508 / S288c</strain>
    </source>
</reference>
<reference key="3">
    <citation type="journal article" date="2014" name="G3 (Bethesda)">
        <title>The reference genome sequence of Saccharomyces cerevisiae: Then and now.</title>
        <authorList>
            <person name="Engel S.R."/>
            <person name="Dietrich F.S."/>
            <person name="Fisk D.G."/>
            <person name="Binkley G."/>
            <person name="Balakrishnan R."/>
            <person name="Costanzo M.C."/>
            <person name="Dwight S.S."/>
            <person name="Hitz B.C."/>
            <person name="Karra K."/>
            <person name="Nash R.S."/>
            <person name="Weng S."/>
            <person name="Wong E.D."/>
            <person name="Lloyd P."/>
            <person name="Skrzypek M.S."/>
            <person name="Miyasato S.R."/>
            <person name="Simison M."/>
            <person name="Cherry J.M."/>
        </authorList>
    </citation>
    <scope>GENOME REANNOTATION</scope>
    <source>
        <strain>ATCC 204508 / S288c</strain>
    </source>
</reference>
<reference key="4">
    <citation type="journal article" date="2003" name="J. Biol. Chem.">
        <title>The yeast mitochondrial degradosome. Its composition, interplay between RNA helicase and RNase activities and the role in mitochondrial RNA metabolism.</title>
        <authorList>
            <person name="Dziembowski A."/>
            <person name="Piwowarski J."/>
            <person name="Hoser R."/>
            <person name="Minczuk M."/>
            <person name="Dmochowska A."/>
            <person name="Siep M."/>
            <person name="van der Spek H."/>
            <person name="Grivell L.A."/>
            <person name="Stepien P.P."/>
        </authorList>
    </citation>
    <scope>FUNCTION</scope>
    <scope>SUBUNIT</scope>
</reference>
<reference key="5">
    <citation type="journal article" date="2003" name="Nature">
        <title>Global analysis of protein expression in yeast.</title>
        <authorList>
            <person name="Ghaemmaghami S."/>
            <person name="Huh W.-K."/>
            <person name="Bower K."/>
            <person name="Howson R.W."/>
            <person name="Belle A."/>
            <person name="Dephoure N."/>
            <person name="O'Shea E.K."/>
            <person name="Weissman J.S."/>
        </authorList>
    </citation>
    <scope>LEVEL OF PROTEIN EXPRESSION [LARGE SCALE ANALYSIS]</scope>
</reference>
<reference key="6">
    <citation type="journal article" date="2003" name="Proc. Natl. Acad. Sci. U.S.A.">
        <title>The proteome of Saccharomyces cerevisiae mitochondria.</title>
        <authorList>
            <person name="Sickmann A."/>
            <person name="Reinders J."/>
            <person name="Wagner Y."/>
            <person name="Joppich C."/>
            <person name="Zahedi R.P."/>
            <person name="Meyer H.E."/>
            <person name="Schoenfisch B."/>
            <person name="Perschil I."/>
            <person name="Chacinska A."/>
            <person name="Guiard B."/>
            <person name="Rehling P."/>
            <person name="Pfanner N."/>
            <person name="Meisinger C."/>
        </authorList>
    </citation>
    <scope>SUBCELLULAR LOCATION [LARGE SCALE ANALYSIS]</scope>
    <source>
        <strain>ATCC 76625 / YPH499</strain>
    </source>
</reference>
<organism>
    <name type="scientific">Saccharomyces cerevisiae (strain ATCC 204508 / S288c)</name>
    <name type="common">Baker's yeast</name>
    <dbReference type="NCBI Taxonomy" id="559292"/>
    <lineage>
        <taxon>Eukaryota</taxon>
        <taxon>Fungi</taxon>
        <taxon>Dikarya</taxon>
        <taxon>Ascomycota</taxon>
        <taxon>Saccharomycotina</taxon>
        <taxon>Saccharomycetes</taxon>
        <taxon>Saccharomycetales</taxon>
        <taxon>Saccharomycetaceae</taxon>
        <taxon>Saccharomyces</taxon>
    </lineage>
</organism>
<accession>P32580</accession>
<accession>D6W3Y4</accession>
<accession>Q02649</accession>
<protein>
    <recommendedName>
        <fullName>ATP-dependent RNA helicase SUV3, mitochondrial</fullName>
        <ecNumber>3.6.4.13</ecNumber>
    </recommendedName>
</protein>
<name>SUV3_YEAST</name>
<keyword id="KW-0067">ATP-binding</keyword>
<keyword id="KW-0347">Helicase</keyword>
<keyword id="KW-0378">Hydrolase</keyword>
<keyword id="KW-0496">Mitochondrion</keyword>
<keyword id="KW-0547">Nucleotide-binding</keyword>
<keyword id="KW-1185">Reference proteome</keyword>
<keyword id="KW-0694">RNA-binding</keyword>
<keyword id="KW-0809">Transit peptide</keyword>
<comment type="function">
    <text evidence="4">Required for intron-independent turnover and processing of mitochondrial RNA. It is a key control element in nuclear-mitochondrial interactions.</text>
</comment>
<comment type="catalytic activity">
    <reaction>
        <text>ATP + H2O = ADP + phosphate + H(+)</text>
        <dbReference type="Rhea" id="RHEA:13065"/>
        <dbReference type="ChEBI" id="CHEBI:15377"/>
        <dbReference type="ChEBI" id="CHEBI:15378"/>
        <dbReference type="ChEBI" id="CHEBI:30616"/>
        <dbReference type="ChEBI" id="CHEBI:43474"/>
        <dbReference type="ChEBI" id="CHEBI:456216"/>
        <dbReference type="EC" id="3.6.4.13"/>
    </reaction>
</comment>
<comment type="subunit">
    <text evidence="4">MSU1 and SUV3 are the two components of the mitochondrial degradosome (mtEXO).</text>
</comment>
<comment type="interaction">
    <interactant intactId="EBI-18594">
        <id>P32580</id>
    </interactant>
    <interactant intactId="EBI-11468">
        <id>P39112</id>
        <label>DSS1</label>
    </interactant>
    <organismsDiffer>false</organismsDiffer>
    <experiments>2</experiments>
</comment>
<comment type="subcellular location">
    <subcellularLocation>
        <location evidence="7">Mitochondrion matrix</location>
    </subcellularLocation>
</comment>
<comment type="miscellaneous">
    <text evidence="6">Present with 1440 molecules/cell in log phase SD medium.</text>
</comment>
<comment type="similarity">
    <text evidence="8">Belongs to the helicase family.</text>
</comment>
<proteinExistence type="evidence at protein level"/>
<dbReference type="EC" id="3.6.4.13"/>
<dbReference type="EMBL" id="M91167">
    <property type="protein sequence ID" value="AAA35135.1"/>
    <property type="molecule type" value="Genomic_DNA"/>
</dbReference>
<dbReference type="EMBL" id="U36624">
    <property type="protein sequence ID" value="AAB68158.1"/>
    <property type="molecule type" value="Genomic_DNA"/>
</dbReference>
<dbReference type="EMBL" id="BK006949">
    <property type="protein sequence ID" value="DAA11400.1"/>
    <property type="molecule type" value="Genomic_DNA"/>
</dbReference>
<dbReference type="PIR" id="S63453">
    <property type="entry name" value="S63453"/>
</dbReference>
<dbReference type="RefSeq" id="NP_015296.1">
    <property type="nucleotide sequence ID" value="NM_001183843.1"/>
</dbReference>
<dbReference type="SMR" id="P32580"/>
<dbReference type="BioGRID" id="36149">
    <property type="interactions" value="235"/>
</dbReference>
<dbReference type="ComplexPortal" id="CPX-3180">
    <property type="entry name" value="Mitochondrial degradosome complex"/>
</dbReference>
<dbReference type="DIP" id="DIP-6302N"/>
<dbReference type="FunCoup" id="P32580">
    <property type="interactions" value="794"/>
</dbReference>
<dbReference type="IntAct" id="P32580">
    <property type="interactions" value="5"/>
</dbReference>
<dbReference type="STRING" id="4932.YPL029W"/>
<dbReference type="GlyGen" id="P32580">
    <property type="glycosylation" value="1 site"/>
</dbReference>
<dbReference type="iPTMnet" id="P32580"/>
<dbReference type="PaxDb" id="4932-YPL029W"/>
<dbReference type="PeptideAtlas" id="P32580"/>
<dbReference type="EnsemblFungi" id="YPL029W_mRNA">
    <property type="protein sequence ID" value="YPL029W"/>
    <property type="gene ID" value="YPL029W"/>
</dbReference>
<dbReference type="GeneID" id="856078"/>
<dbReference type="KEGG" id="sce:YPL029W"/>
<dbReference type="AGR" id="SGD:S000005950"/>
<dbReference type="SGD" id="S000005950">
    <property type="gene designation" value="SUV3"/>
</dbReference>
<dbReference type="VEuPathDB" id="FungiDB:YPL029W"/>
<dbReference type="eggNOG" id="KOG0953">
    <property type="taxonomic scope" value="Eukaryota"/>
</dbReference>
<dbReference type="GeneTree" id="ENSGT00390000003100"/>
<dbReference type="HOGENOM" id="CLU_010647_2_2_1"/>
<dbReference type="InParanoid" id="P32580"/>
<dbReference type="OMA" id="FCEMIIF"/>
<dbReference type="OrthoDB" id="6692397at2759"/>
<dbReference type="BioCyc" id="YEAST:G3O-33944-MONOMER"/>
<dbReference type="BioGRID-ORCS" id="856078">
    <property type="hits" value="4 hits in 10 CRISPR screens"/>
</dbReference>
<dbReference type="PRO" id="PR:P32580"/>
<dbReference type="Proteomes" id="UP000002311">
    <property type="component" value="Chromosome XVI"/>
</dbReference>
<dbReference type="RNAct" id="P32580">
    <property type="molecule type" value="protein"/>
</dbReference>
<dbReference type="GO" id="GO:0045025">
    <property type="term" value="C:mitochondrial degradosome"/>
    <property type="evidence" value="ECO:0000314"/>
    <property type="project" value="SGD"/>
</dbReference>
<dbReference type="GO" id="GO:0005759">
    <property type="term" value="C:mitochondrial matrix"/>
    <property type="evidence" value="ECO:0007669"/>
    <property type="project" value="UniProtKB-SubCell"/>
</dbReference>
<dbReference type="GO" id="GO:0005739">
    <property type="term" value="C:mitochondrion"/>
    <property type="evidence" value="ECO:0007005"/>
    <property type="project" value="SGD"/>
</dbReference>
<dbReference type="GO" id="GO:0005524">
    <property type="term" value="F:ATP binding"/>
    <property type="evidence" value="ECO:0007669"/>
    <property type="project" value="UniProtKB-KW"/>
</dbReference>
<dbReference type="GO" id="GO:0016887">
    <property type="term" value="F:ATP hydrolysis activity"/>
    <property type="evidence" value="ECO:0007669"/>
    <property type="project" value="RHEA"/>
</dbReference>
<dbReference type="GO" id="GO:0003723">
    <property type="term" value="F:RNA binding"/>
    <property type="evidence" value="ECO:0007669"/>
    <property type="project" value="UniProtKB-KW"/>
</dbReference>
<dbReference type="GO" id="GO:0003724">
    <property type="term" value="F:RNA helicase activity"/>
    <property type="evidence" value="ECO:0000314"/>
    <property type="project" value="SGD"/>
</dbReference>
<dbReference type="GO" id="GO:0000372">
    <property type="term" value="P:Group I intron splicing"/>
    <property type="evidence" value="ECO:0000316"/>
    <property type="project" value="SGD"/>
</dbReference>
<dbReference type="GO" id="GO:0006264">
    <property type="term" value="P:mitochondrial DNA replication"/>
    <property type="evidence" value="ECO:0000315"/>
    <property type="project" value="SGD"/>
</dbReference>
<dbReference type="GO" id="GO:0000965">
    <property type="term" value="P:mitochondrial RNA 3'-end processing"/>
    <property type="evidence" value="ECO:0000318"/>
    <property type="project" value="GO_Central"/>
</dbReference>
<dbReference type="GO" id="GO:0000957">
    <property type="term" value="P:mitochondrial RNA catabolic process"/>
    <property type="evidence" value="ECO:0000314"/>
    <property type="project" value="ComplexPortal"/>
</dbReference>
<dbReference type="CDD" id="cd17913">
    <property type="entry name" value="DEXQc_Suv3"/>
    <property type="match status" value="1"/>
</dbReference>
<dbReference type="CDD" id="cd18805">
    <property type="entry name" value="SF2_C_suv3"/>
    <property type="match status" value="1"/>
</dbReference>
<dbReference type="FunFam" id="3.40.50.300:FF:000269">
    <property type="entry name" value="ATP-dependent RNA helicase SUPV3L1, mitochondrial"/>
    <property type="match status" value="1"/>
</dbReference>
<dbReference type="FunFam" id="1.20.58.1080:FF:000004">
    <property type="entry name" value="SUV3p ATP-dependent RNA helicase"/>
    <property type="match status" value="1"/>
</dbReference>
<dbReference type="FunFam" id="3.40.50.300:FF:001549">
    <property type="entry name" value="SUV3p ATP-dependent RNA helicase"/>
    <property type="match status" value="1"/>
</dbReference>
<dbReference type="Gene3D" id="1.20.272.40">
    <property type="match status" value="1"/>
</dbReference>
<dbReference type="Gene3D" id="1.20.58.1080">
    <property type="match status" value="1"/>
</dbReference>
<dbReference type="Gene3D" id="3.40.50.300">
    <property type="entry name" value="P-loop containing nucleotide triphosphate hydrolases"/>
    <property type="match status" value="2"/>
</dbReference>
<dbReference type="InterPro" id="IPR055206">
    <property type="entry name" value="DEXQc_SUV3"/>
</dbReference>
<dbReference type="InterPro" id="IPR014001">
    <property type="entry name" value="Helicase_ATP-bd"/>
</dbReference>
<dbReference type="InterPro" id="IPR001650">
    <property type="entry name" value="Helicase_C-like"/>
</dbReference>
<dbReference type="InterPro" id="IPR027417">
    <property type="entry name" value="P-loop_NTPase"/>
</dbReference>
<dbReference type="InterPro" id="IPR050699">
    <property type="entry name" value="RNA-DNA_Helicase"/>
</dbReference>
<dbReference type="InterPro" id="IPR022192">
    <property type="entry name" value="SUV3_C"/>
</dbReference>
<dbReference type="InterPro" id="IPR044774">
    <property type="entry name" value="Suv3_DEXQc"/>
</dbReference>
<dbReference type="PANTHER" id="PTHR12131">
    <property type="entry name" value="ATP-DEPENDENT RNA AND DNA HELICASE"/>
    <property type="match status" value="1"/>
</dbReference>
<dbReference type="PANTHER" id="PTHR12131:SF1">
    <property type="entry name" value="ATP-DEPENDENT RNA HELICASE SUPV3L1, MITOCHONDRIAL-RELATED"/>
    <property type="match status" value="1"/>
</dbReference>
<dbReference type="Pfam" id="PF22527">
    <property type="entry name" value="DEXQc_Suv3"/>
    <property type="match status" value="1"/>
</dbReference>
<dbReference type="Pfam" id="PF00271">
    <property type="entry name" value="Helicase_C"/>
    <property type="match status" value="1"/>
</dbReference>
<dbReference type="Pfam" id="PF12513">
    <property type="entry name" value="SUV3_C"/>
    <property type="match status" value="1"/>
</dbReference>
<dbReference type="SMART" id="SM00487">
    <property type="entry name" value="DEXDc"/>
    <property type="match status" value="1"/>
</dbReference>
<dbReference type="SMART" id="SM00490">
    <property type="entry name" value="HELICc"/>
    <property type="match status" value="1"/>
</dbReference>
<dbReference type="SUPFAM" id="SSF52540">
    <property type="entry name" value="P-loop containing nucleoside triphosphate hydrolases"/>
    <property type="match status" value="1"/>
</dbReference>
<dbReference type="PROSITE" id="PS51192">
    <property type="entry name" value="HELICASE_ATP_BIND_1"/>
    <property type="match status" value="1"/>
</dbReference>
<dbReference type="PROSITE" id="PS51194">
    <property type="entry name" value="HELICASE_CTER"/>
    <property type="match status" value="1"/>
</dbReference>
<gene>
    <name type="primary">SUV3</name>
    <name type="ordered locus">YPL029W</name>
    <name type="ORF">LPB2W</name>
</gene>